<dbReference type="EMBL" id="AM286415">
    <property type="protein sequence ID" value="CAL13430.1"/>
    <property type="molecule type" value="Genomic_DNA"/>
</dbReference>
<dbReference type="RefSeq" id="WP_005173528.1">
    <property type="nucleotide sequence ID" value="NC_008800.1"/>
</dbReference>
<dbReference type="RefSeq" id="YP_001007573.1">
    <property type="nucleotide sequence ID" value="NC_008800.1"/>
</dbReference>
<dbReference type="KEGG" id="yen:YE3405"/>
<dbReference type="PATRIC" id="fig|393305.7.peg.3616"/>
<dbReference type="eggNOG" id="COG1279">
    <property type="taxonomic scope" value="Bacteria"/>
</dbReference>
<dbReference type="HOGENOM" id="CLU_087840_0_1_6"/>
<dbReference type="OrthoDB" id="5638726at2"/>
<dbReference type="Proteomes" id="UP000000642">
    <property type="component" value="Chromosome"/>
</dbReference>
<dbReference type="GO" id="GO:0005886">
    <property type="term" value="C:plasma membrane"/>
    <property type="evidence" value="ECO:0007669"/>
    <property type="project" value="UniProtKB-SubCell"/>
</dbReference>
<dbReference type="GO" id="GO:0061459">
    <property type="term" value="F:L-arginine transmembrane transporter activity"/>
    <property type="evidence" value="ECO:0007669"/>
    <property type="project" value="UniProtKB-UniRule"/>
</dbReference>
<dbReference type="HAMAP" id="MF_01901">
    <property type="entry name" value="ArgO"/>
    <property type="match status" value="1"/>
</dbReference>
<dbReference type="InterPro" id="IPR023445">
    <property type="entry name" value="Arg_export_ArgO_enterobac"/>
</dbReference>
<dbReference type="InterPro" id="IPR001123">
    <property type="entry name" value="LeuE-type"/>
</dbReference>
<dbReference type="InterPro" id="IPR004777">
    <property type="entry name" value="Lys/arg_exporter"/>
</dbReference>
<dbReference type="NCBIfam" id="TIGR00948">
    <property type="entry name" value="2a75"/>
    <property type="match status" value="1"/>
</dbReference>
<dbReference type="NCBIfam" id="NF006801">
    <property type="entry name" value="PRK09304.1"/>
    <property type="match status" value="1"/>
</dbReference>
<dbReference type="PANTHER" id="PTHR30086">
    <property type="entry name" value="ARGININE EXPORTER PROTEIN ARGO"/>
    <property type="match status" value="1"/>
</dbReference>
<dbReference type="PANTHER" id="PTHR30086:SF20">
    <property type="entry name" value="ARGININE EXPORTER PROTEIN ARGO-RELATED"/>
    <property type="match status" value="1"/>
</dbReference>
<dbReference type="Pfam" id="PF01810">
    <property type="entry name" value="LysE"/>
    <property type="match status" value="1"/>
</dbReference>
<gene>
    <name evidence="1" type="primary">argO</name>
    <name type="ordered locus">YE3405</name>
</gene>
<organism>
    <name type="scientific">Yersinia enterocolitica serotype O:8 / biotype 1B (strain NCTC 13174 / 8081)</name>
    <dbReference type="NCBI Taxonomy" id="393305"/>
    <lineage>
        <taxon>Bacteria</taxon>
        <taxon>Pseudomonadati</taxon>
        <taxon>Pseudomonadota</taxon>
        <taxon>Gammaproteobacteria</taxon>
        <taxon>Enterobacterales</taxon>
        <taxon>Yersiniaceae</taxon>
        <taxon>Yersinia</taxon>
    </lineage>
</organism>
<comment type="function">
    <text evidence="1">Involved in the export of arginine. Important to control the intracellular level of arginine and the correct balance between arginine and lysine.</text>
</comment>
<comment type="catalytic activity">
    <reaction evidence="1">
        <text>L-arginine(in) = L-arginine(out)</text>
        <dbReference type="Rhea" id="RHEA:32143"/>
        <dbReference type="ChEBI" id="CHEBI:32682"/>
    </reaction>
    <physiologicalReaction direction="left-to-right" evidence="1">
        <dbReference type="Rhea" id="RHEA:32144"/>
    </physiologicalReaction>
</comment>
<comment type="subcellular location">
    <subcellularLocation>
        <location evidence="1">Cell inner membrane</location>
        <topology evidence="1">Multi-pass membrane protein</topology>
    </subcellularLocation>
</comment>
<comment type="similarity">
    <text evidence="1">Belongs to the LysE/ArgO transporter (TC 2.A.75) family.</text>
</comment>
<proteinExistence type="inferred from homology"/>
<feature type="chain" id="PRO_1000070583" description="Arginine exporter protein ArgO">
    <location>
        <begin position="1"/>
        <end position="205"/>
    </location>
</feature>
<feature type="transmembrane region" description="Helical" evidence="1">
    <location>
        <begin position="1"/>
        <end position="21"/>
    </location>
</feature>
<feature type="transmembrane region" description="Helical" evidence="1">
    <location>
        <begin position="42"/>
        <end position="62"/>
    </location>
</feature>
<feature type="transmembrane region" description="Helical" evidence="1">
    <location>
        <begin position="67"/>
        <end position="87"/>
    </location>
</feature>
<feature type="transmembrane region" description="Helical" evidence="1">
    <location>
        <begin position="111"/>
        <end position="131"/>
    </location>
</feature>
<feature type="transmembrane region" description="Helical" evidence="1">
    <location>
        <begin position="147"/>
        <end position="167"/>
    </location>
</feature>
<feature type="transmembrane region" description="Helical" evidence="1">
    <location>
        <begin position="182"/>
        <end position="202"/>
    </location>
</feature>
<reference key="1">
    <citation type="journal article" date="2006" name="PLoS Genet.">
        <title>The complete genome sequence and comparative genome analysis of the high pathogenicity Yersinia enterocolitica strain 8081.</title>
        <authorList>
            <person name="Thomson N.R."/>
            <person name="Howard S."/>
            <person name="Wren B.W."/>
            <person name="Holden M.T.G."/>
            <person name="Crossman L."/>
            <person name="Challis G.L."/>
            <person name="Churcher C."/>
            <person name="Mungall K."/>
            <person name="Brooks K."/>
            <person name="Chillingworth T."/>
            <person name="Feltwell T."/>
            <person name="Abdellah Z."/>
            <person name="Hauser H."/>
            <person name="Jagels K."/>
            <person name="Maddison M."/>
            <person name="Moule S."/>
            <person name="Sanders M."/>
            <person name="Whitehead S."/>
            <person name="Quail M.A."/>
            <person name="Dougan G."/>
            <person name="Parkhill J."/>
            <person name="Prentice M.B."/>
        </authorList>
    </citation>
    <scope>NUCLEOTIDE SEQUENCE [LARGE SCALE GENOMIC DNA]</scope>
    <source>
        <strain>NCTC 13174 / 8081</strain>
    </source>
</reference>
<protein>
    <recommendedName>
        <fullName evidence="1">Arginine exporter protein ArgO</fullName>
    </recommendedName>
</protein>
<sequence length="205" mass="22062">MLAVFLQGFALSAAMILPLGPQNAFVMNQGIKRQHHLMSASLCALSDIILICAGIFGGSALLNRSPLLLALVTWGGVAFLLWYGWGALMAAWRGDSSSAAVAAGTQGRWRIIVTLLAVTWLNPHVYLDTFVVLGSLGGQLLPDVRPWFAFGAVSASVAWFFALALLAAWLSPWLNRPGSQRVINLLVGGVMWFIAFQLARQGLNL</sequence>
<accession>A1JPP8</accession>
<evidence type="ECO:0000255" key="1">
    <source>
        <dbReference type="HAMAP-Rule" id="MF_01901"/>
    </source>
</evidence>
<name>ARGO_YERE8</name>
<keyword id="KW-0029">Amino-acid transport</keyword>
<keyword id="KW-0997">Cell inner membrane</keyword>
<keyword id="KW-1003">Cell membrane</keyword>
<keyword id="KW-0472">Membrane</keyword>
<keyword id="KW-0812">Transmembrane</keyword>
<keyword id="KW-1133">Transmembrane helix</keyword>
<keyword id="KW-0813">Transport</keyword>